<organism>
    <name type="scientific">Arabidopsis thaliana</name>
    <name type="common">Mouse-ear cress</name>
    <dbReference type="NCBI Taxonomy" id="3702"/>
    <lineage>
        <taxon>Eukaryota</taxon>
        <taxon>Viridiplantae</taxon>
        <taxon>Streptophyta</taxon>
        <taxon>Embryophyta</taxon>
        <taxon>Tracheophyta</taxon>
        <taxon>Spermatophyta</taxon>
        <taxon>Magnoliopsida</taxon>
        <taxon>eudicotyledons</taxon>
        <taxon>Gunneridae</taxon>
        <taxon>Pentapetalae</taxon>
        <taxon>rosids</taxon>
        <taxon>malvids</taxon>
        <taxon>Brassicales</taxon>
        <taxon>Brassicaceae</taxon>
        <taxon>Camelineae</taxon>
        <taxon>Arabidopsis</taxon>
    </lineage>
</organism>
<evidence type="ECO:0000250" key="1">
    <source>
        <dbReference type="UniProtKB" id="P42818"/>
    </source>
</evidence>
<evidence type="ECO:0000255" key="2">
    <source>
        <dbReference type="PROSITE-ProRule" id="PRU00159"/>
    </source>
</evidence>
<evidence type="ECO:0000255" key="3">
    <source>
        <dbReference type="PROSITE-ProRule" id="PRU00618"/>
    </source>
</evidence>
<evidence type="ECO:0000256" key="4">
    <source>
        <dbReference type="SAM" id="MobiDB-lite"/>
    </source>
</evidence>
<evidence type="ECO:0000303" key="5">
    <source>
    </source>
</evidence>
<evidence type="ECO:0000303" key="6">
    <source>
    </source>
</evidence>
<evidence type="ECO:0000305" key="7"/>
<evidence type="ECO:0000312" key="8">
    <source>
        <dbReference type="Araport" id="AT3G17850"/>
    </source>
</evidence>
<evidence type="ECO:0000312" key="9">
    <source>
        <dbReference type="EMBL" id="BAB02708.1"/>
    </source>
</evidence>
<evidence type="ECO:0007744" key="10">
    <source>
    </source>
</evidence>
<feature type="chain" id="PRO_0000431354" description="Probable serine/threonine protein kinase IREH1">
    <location>
        <begin position="1"/>
        <end position="1296"/>
    </location>
</feature>
<feature type="domain" description="Protein kinase" evidence="2">
    <location>
        <begin position="882"/>
        <end position="1171"/>
    </location>
</feature>
<feature type="domain" description="AGC-kinase C-terminal" evidence="3">
    <location>
        <begin position="1172"/>
        <end position="1277"/>
    </location>
</feature>
<feature type="zinc finger region" description="C2H2-type; atypical" evidence="5">
    <location>
        <begin position="602"/>
        <end position="621"/>
    </location>
</feature>
<feature type="region of interest" description="Disordered" evidence="4">
    <location>
        <begin position="1"/>
        <end position="274"/>
    </location>
</feature>
<feature type="region of interest" description="Disordered" evidence="4">
    <location>
        <begin position="457"/>
        <end position="480"/>
    </location>
</feature>
<feature type="region of interest" description="Disordered" evidence="4">
    <location>
        <begin position="524"/>
        <end position="553"/>
    </location>
</feature>
<feature type="region of interest" description="Disordered" evidence="4">
    <location>
        <begin position="724"/>
        <end position="750"/>
    </location>
</feature>
<feature type="region of interest" description="Disordered" evidence="4">
    <location>
        <begin position="1214"/>
        <end position="1245"/>
    </location>
</feature>
<feature type="compositionally biased region" description="Low complexity" evidence="4">
    <location>
        <begin position="10"/>
        <end position="32"/>
    </location>
</feature>
<feature type="compositionally biased region" description="Basic and acidic residues" evidence="4">
    <location>
        <begin position="68"/>
        <end position="77"/>
    </location>
</feature>
<feature type="compositionally biased region" description="Basic and acidic residues" evidence="4">
    <location>
        <begin position="101"/>
        <end position="112"/>
    </location>
</feature>
<feature type="compositionally biased region" description="Basic and acidic residues" evidence="4">
    <location>
        <begin position="178"/>
        <end position="208"/>
    </location>
</feature>
<feature type="compositionally biased region" description="Low complexity" evidence="4">
    <location>
        <begin position="214"/>
        <end position="249"/>
    </location>
</feature>
<feature type="compositionally biased region" description="Polar residues" evidence="4">
    <location>
        <begin position="730"/>
        <end position="740"/>
    </location>
</feature>
<feature type="compositionally biased region" description="Polar residues" evidence="4">
    <location>
        <begin position="1225"/>
        <end position="1235"/>
    </location>
</feature>
<feature type="compositionally biased region" description="Basic and acidic residues" evidence="4">
    <location>
        <begin position="1236"/>
        <end position="1245"/>
    </location>
</feature>
<feature type="active site" description="Proton acceptor" evidence="2">
    <location>
        <position position="1005"/>
    </location>
</feature>
<feature type="binding site" evidence="2">
    <location>
        <begin position="888"/>
        <end position="896"/>
    </location>
    <ligand>
        <name>ATP</name>
        <dbReference type="ChEBI" id="CHEBI:30616"/>
    </ligand>
</feature>
<feature type="binding site" evidence="2">
    <location>
        <position position="911"/>
    </location>
    <ligand>
        <name>ATP</name>
        <dbReference type="ChEBI" id="CHEBI:30616"/>
    </ligand>
</feature>
<feature type="modified residue" description="Phosphoserine" evidence="10">
    <location>
        <position position="32"/>
    </location>
</feature>
<feature type="modified residue" description="Phosphoserine" evidence="1">
    <location>
        <position position="1070"/>
    </location>
</feature>
<feature type="sequence conflict" description="In Ref. 3; BAC41900." evidence="7" ref="3">
    <original>K</original>
    <variation>R</variation>
    <location>
        <position position="179"/>
    </location>
</feature>
<feature type="sequence conflict" description="In Ref. 3; BAC41900." evidence="7" ref="3">
    <original>P</original>
    <variation>H</variation>
    <location>
        <position position="1131"/>
    </location>
</feature>
<name>IREH1_ARATH</name>
<comment type="function">
    <text evidence="5">May be involved in root hair elongation.</text>
</comment>
<comment type="catalytic activity">
    <reaction evidence="7">
        <text>L-seryl-[protein] + ATP = O-phospho-L-seryl-[protein] + ADP + H(+)</text>
        <dbReference type="Rhea" id="RHEA:17989"/>
        <dbReference type="Rhea" id="RHEA-COMP:9863"/>
        <dbReference type="Rhea" id="RHEA-COMP:11604"/>
        <dbReference type="ChEBI" id="CHEBI:15378"/>
        <dbReference type="ChEBI" id="CHEBI:29999"/>
        <dbReference type="ChEBI" id="CHEBI:30616"/>
        <dbReference type="ChEBI" id="CHEBI:83421"/>
        <dbReference type="ChEBI" id="CHEBI:456216"/>
        <dbReference type="EC" id="2.7.11.1"/>
    </reaction>
</comment>
<comment type="catalytic activity">
    <reaction evidence="7">
        <text>L-threonyl-[protein] + ATP = O-phospho-L-threonyl-[protein] + ADP + H(+)</text>
        <dbReference type="Rhea" id="RHEA:46608"/>
        <dbReference type="Rhea" id="RHEA-COMP:11060"/>
        <dbReference type="Rhea" id="RHEA-COMP:11605"/>
        <dbReference type="ChEBI" id="CHEBI:15378"/>
        <dbReference type="ChEBI" id="CHEBI:30013"/>
        <dbReference type="ChEBI" id="CHEBI:30616"/>
        <dbReference type="ChEBI" id="CHEBI:61977"/>
        <dbReference type="ChEBI" id="CHEBI:456216"/>
        <dbReference type="EC" id="2.7.11.1"/>
    </reaction>
</comment>
<comment type="similarity">
    <text evidence="7">Belongs to the protein kinase superfamily. AGC Ser/Thr protein kinase family.</text>
</comment>
<comment type="sequence caution" evidence="7">
    <conflict type="erroneous gene model prediction">
        <sequence resource="EMBL-CDS" id="BAB02708"/>
    </conflict>
</comment>
<gene>
    <name evidence="5" type="primary">IREH1</name>
    <name evidence="8" type="ordered locus">At3g17850</name>
    <name evidence="9" type="ORF">MEB5.7</name>
</gene>
<dbReference type="EC" id="2.7.11.1" evidence="7"/>
<dbReference type="EMBL" id="AB019230">
    <property type="protein sequence ID" value="BAB02708.1"/>
    <property type="status" value="ALT_SEQ"/>
    <property type="molecule type" value="Genomic_DNA"/>
</dbReference>
<dbReference type="EMBL" id="CP002686">
    <property type="protein sequence ID" value="AEE76015.1"/>
    <property type="molecule type" value="Genomic_DNA"/>
</dbReference>
<dbReference type="EMBL" id="AK117224">
    <property type="protein sequence ID" value="BAC41900.1"/>
    <property type="molecule type" value="mRNA"/>
</dbReference>
<dbReference type="EMBL" id="AB037134">
    <property type="protein sequence ID" value="BAA89784.1"/>
    <property type="molecule type" value="Genomic_DNA"/>
</dbReference>
<dbReference type="RefSeq" id="NP_188412.2">
    <property type="nucleotide sequence ID" value="NM_112666.3"/>
</dbReference>
<dbReference type="SMR" id="F4J6F6"/>
<dbReference type="BioGRID" id="6387">
    <property type="interactions" value="2"/>
</dbReference>
<dbReference type="FunCoup" id="F4J6F6">
    <property type="interactions" value="2195"/>
</dbReference>
<dbReference type="STRING" id="3702.F4J6F6"/>
<dbReference type="iPTMnet" id="F4J6F6"/>
<dbReference type="PaxDb" id="3702-AT3G17850.1"/>
<dbReference type="ProMEX" id="F4J6F6"/>
<dbReference type="ProteomicsDB" id="248491"/>
<dbReference type="EnsemblPlants" id="AT3G17850.1">
    <property type="protein sequence ID" value="AT3G17850.1"/>
    <property type="gene ID" value="AT3G17850"/>
</dbReference>
<dbReference type="GeneID" id="821054"/>
<dbReference type="Gramene" id="AT3G17850.1">
    <property type="protein sequence ID" value="AT3G17850.1"/>
    <property type="gene ID" value="AT3G17850"/>
</dbReference>
<dbReference type="KEGG" id="ath:AT3G17850"/>
<dbReference type="Araport" id="AT3G17850"/>
<dbReference type="TAIR" id="AT3G17850">
    <property type="gene designation" value="IREH1"/>
</dbReference>
<dbReference type="eggNOG" id="KOG0606">
    <property type="taxonomic scope" value="Eukaryota"/>
</dbReference>
<dbReference type="HOGENOM" id="CLU_000288_130_2_1"/>
<dbReference type="InParanoid" id="F4J6F6"/>
<dbReference type="OMA" id="PTHYVEN"/>
<dbReference type="PRO" id="PR:F4J6F6"/>
<dbReference type="Proteomes" id="UP000006548">
    <property type="component" value="Chromosome 3"/>
</dbReference>
<dbReference type="ExpressionAtlas" id="F4J6F6">
    <property type="expression patterns" value="baseline and differential"/>
</dbReference>
<dbReference type="GO" id="GO:0035618">
    <property type="term" value="C:root hair"/>
    <property type="evidence" value="ECO:0000314"/>
    <property type="project" value="TAIR"/>
</dbReference>
<dbReference type="GO" id="GO:0005524">
    <property type="term" value="F:ATP binding"/>
    <property type="evidence" value="ECO:0007669"/>
    <property type="project" value="UniProtKB-KW"/>
</dbReference>
<dbReference type="GO" id="GO:0016301">
    <property type="term" value="F:kinase activity"/>
    <property type="evidence" value="ECO:0000250"/>
    <property type="project" value="TAIR"/>
</dbReference>
<dbReference type="GO" id="GO:0106310">
    <property type="term" value="F:protein serine kinase activity"/>
    <property type="evidence" value="ECO:0007669"/>
    <property type="project" value="RHEA"/>
</dbReference>
<dbReference type="GO" id="GO:0004674">
    <property type="term" value="F:protein serine/threonine kinase activity"/>
    <property type="evidence" value="ECO:0007005"/>
    <property type="project" value="TAIR"/>
</dbReference>
<dbReference type="GO" id="GO:0008270">
    <property type="term" value="F:zinc ion binding"/>
    <property type="evidence" value="ECO:0007669"/>
    <property type="project" value="UniProtKB-KW"/>
</dbReference>
<dbReference type="GO" id="GO:0046777">
    <property type="term" value="P:protein autophosphorylation"/>
    <property type="evidence" value="ECO:0007005"/>
    <property type="project" value="TAIR"/>
</dbReference>
<dbReference type="CDD" id="cd05579">
    <property type="entry name" value="STKc_MAST_like"/>
    <property type="match status" value="1"/>
</dbReference>
<dbReference type="FunFam" id="3.30.200.20:FF:000147">
    <property type="entry name" value="probable serine/threonine protein kinase IREH1"/>
    <property type="match status" value="1"/>
</dbReference>
<dbReference type="Gene3D" id="3.30.200.20">
    <property type="entry name" value="Phosphorylase Kinase, domain 1"/>
    <property type="match status" value="1"/>
</dbReference>
<dbReference type="Gene3D" id="1.10.510.10">
    <property type="entry name" value="Transferase(Phosphotransferase) domain 1"/>
    <property type="match status" value="1"/>
</dbReference>
<dbReference type="InterPro" id="IPR000961">
    <property type="entry name" value="AGC-kinase_C"/>
</dbReference>
<dbReference type="InterPro" id="IPR011009">
    <property type="entry name" value="Kinase-like_dom_sf"/>
</dbReference>
<dbReference type="InterPro" id="IPR000719">
    <property type="entry name" value="Prot_kinase_dom"/>
</dbReference>
<dbReference type="InterPro" id="IPR008271">
    <property type="entry name" value="Ser/Thr_kinase_AS"/>
</dbReference>
<dbReference type="InterPro" id="IPR050236">
    <property type="entry name" value="Ser_Thr_kinase_AGC"/>
</dbReference>
<dbReference type="PANTHER" id="PTHR24356">
    <property type="entry name" value="SERINE/THREONINE-PROTEIN KINASE"/>
    <property type="match status" value="1"/>
</dbReference>
<dbReference type="PANTHER" id="PTHR24356:SF1">
    <property type="entry name" value="SERINE_THREONINE-PROTEIN KINASE GREATWALL"/>
    <property type="match status" value="1"/>
</dbReference>
<dbReference type="Pfam" id="PF00069">
    <property type="entry name" value="Pkinase"/>
    <property type="match status" value="1"/>
</dbReference>
<dbReference type="SMART" id="SM00220">
    <property type="entry name" value="S_TKc"/>
    <property type="match status" value="1"/>
</dbReference>
<dbReference type="SUPFAM" id="SSF56112">
    <property type="entry name" value="Protein kinase-like (PK-like)"/>
    <property type="match status" value="1"/>
</dbReference>
<dbReference type="PROSITE" id="PS51285">
    <property type="entry name" value="AGC_KINASE_CTER"/>
    <property type="match status" value="1"/>
</dbReference>
<dbReference type="PROSITE" id="PS50011">
    <property type="entry name" value="PROTEIN_KINASE_DOM"/>
    <property type="match status" value="1"/>
</dbReference>
<dbReference type="PROSITE" id="PS00108">
    <property type="entry name" value="PROTEIN_KINASE_ST"/>
    <property type="match status" value="1"/>
</dbReference>
<sequence>MVFKNKLFFSSKKSGSSSPDSSNSPRSVGSNSPIRSDKKKSKSASKDEPPIPIPGFVGVGCKQTQIKDGLKKKDGSSKGKQLSSEVQAHSIGKSNLSPSSEVKKPPPPEVKEGPAFVSPIMASSLGLNRIKTRSGPLPQERVFNYRNDPATSNLSKMGADGGDLGSGSATSGSGSGNRKKEAGSSKLGLEENMDRTRPSDNKSDRDSLSPDTGPPRSLSPTLPPSGSRLQNVASSSGTGRSEMSSGRSGPLRNSDFCTPENSYEWENPKESESPRYQALLRMTSAPRKRFPGDIKSFSHELNSKGVRPFPLWKPRRSNNVEEVLNLIRAKFEKAKEEVNSDLAVFAADLVGVLEKNAESHPEWEETFEDLLILARSCAMTTPGDFWLQCEGIVQDLDDRRQELPPGVLKQLHTRMLFILTRCTRLLQFHKESWGEEEQVVQLRQSRVLHSIEKIPPSGAGRSYSAAKVPSTKKAYSQEQHGLDWKEDAVVRSVPPLAPPENYAIKESESPANIDRMSSWKKLPSPALKTVKEAPASEEQNDSKVEPPNIVGSRQGRDDAAVAILNFPPAKDSHEHSSKHRHNISWGYWGEQPLISEESSIMCRICEEEVPTTHVEDHSRVCTLADKYDQKGLSVDERLMAVAGTLDKIAETFRHKDSLAAAESPDGMKVSNSHLTEESDVLSPRLSDWSRKGSEDMLDCFPEADNSIFMDDLRGLPLMSCRTRFGPKSDQGMTTSSASSMTPRSPIPTPRPDPIEQILGGKGTFHDQDDIPQMSELADIAKCAADAIPGDDQSIPFLLSCLEDLRVVIDRRKFDALTVETFGTRIEKLIREKYVHMCELMDDEKVDLLSTVIDEDAPLEDDVVRSLRTSPVHPRDRTSIDDFEIIKPISRGAFGRVFLAKKRTTGDLFAIKVLKKADMIRKNAVESILAERDILINVRNPFVVRFFYSFTCRDNLYLVMEYLNGGDLYSLLRNLGCLEEDIVRVYIAEVVLALEYLHSEGVVHRDLKPDNLLIAHDGHIKLTDFGLSKVGLINSTDDLAGPAVSGTSLLDEEESRLAASEEQLERRKKRSAVGTPDYLAPEILLGTGHGATADWWSVGIILFELIVGIPPFNAEHPQQIFDNILNRKIPWPHVPEEMSAEAHDIIDRFLTEDPHQRLGARGAAEVKQHIFFKDINWDTLARQKAAFVPASESAIDTSYFRSRYSWNTSDEQFFPSGEVPDYSDADSMTNSSGCSSNHHEEGEAEECEGHAEFESGIPVDYSFSNFSFKNLSQLASINYDLLSKGWKDEPQQIPHHK</sequence>
<keyword id="KW-0067">ATP-binding</keyword>
<keyword id="KW-0341">Growth regulation</keyword>
<keyword id="KW-0418">Kinase</keyword>
<keyword id="KW-0479">Metal-binding</keyword>
<keyword id="KW-0547">Nucleotide-binding</keyword>
<keyword id="KW-0597">Phosphoprotein</keyword>
<keyword id="KW-1185">Reference proteome</keyword>
<keyword id="KW-0723">Serine/threonine-protein kinase</keyword>
<keyword id="KW-0808">Transferase</keyword>
<keyword id="KW-0862">Zinc</keyword>
<keyword id="KW-0863">Zinc-finger</keyword>
<accession>F4J6F6</accession>
<accession>Q8GZ40</accession>
<accession>Q9LVI5</accession>
<accession>Q9MB45</accession>
<proteinExistence type="evidence at protein level"/>
<reference key="1">
    <citation type="journal article" date="2000" name="DNA Res.">
        <title>Structural analysis of Arabidopsis thaliana chromosome 3. I. Sequence features of the regions of 4,504,864 bp covered by sixty P1 and TAC clones.</title>
        <authorList>
            <person name="Sato S."/>
            <person name="Nakamura Y."/>
            <person name="Kaneko T."/>
            <person name="Katoh T."/>
            <person name="Asamizu E."/>
            <person name="Tabata S."/>
        </authorList>
    </citation>
    <scope>NUCLEOTIDE SEQUENCE [LARGE SCALE GENOMIC DNA]</scope>
    <source>
        <strain>cv. Columbia</strain>
    </source>
</reference>
<reference key="2">
    <citation type="journal article" date="2017" name="Plant J.">
        <title>Araport11: a complete reannotation of the Arabidopsis thaliana reference genome.</title>
        <authorList>
            <person name="Cheng C.Y."/>
            <person name="Krishnakumar V."/>
            <person name="Chan A.P."/>
            <person name="Thibaud-Nissen F."/>
            <person name="Schobel S."/>
            <person name="Town C.D."/>
        </authorList>
    </citation>
    <scope>GENOME REANNOTATION</scope>
    <source>
        <strain>cv. Columbia</strain>
    </source>
</reference>
<reference key="3">
    <citation type="journal article" date="2002" name="Science">
        <title>Functional annotation of a full-length Arabidopsis cDNA collection.</title>
        <authorList>
            <person name="Seki M."/>
            <person name="Narusaka M."/>
            <person name="Kamiya A."/>
            <person name="Ishida J."/>
            <person name="Satou M."/>
            <person name="Sakurai T."/>
            <person name="Nakajima M."/>
            <person name="Enju A."/>
            <person name="Akiyama K."/>
            <person name="Oono Y."/>
            <person name="Muramatsu M."/>
            <person name="Hayashizaki Y."/>
            <person name="Kawai J."/>
            <person name="Carninci P."/>
            <person name="Itoh M."/>
            <person name="Ishii Y."/>
            <person name="Arakawa T."/>
            <person name="Shibata K."/>
            <person name="Shinagawa A."/>
            <person name="Shinozaki K."/>
        </authorList>
    </citation>
    <scope>NUCLEOTIDE SEQUENCE [LARGE SCALE MRNA]</scope>
    <source>
        <strain>cv. Columbia</strain>
    </source>
</reference>
<reference key="4">
    <citation type="journal article" date="2002" name="Plant J.">
        <title>The IRE gene encodes a protein kinase homologue and modulates root hair growth in Arabidopsis.</title>
        <authorList>
            <person name="Oyama T."/>
            <person name="Shimura Y."/>
            <person name="Okada K."/>
        </authorList>
    </citation>
    <scope>NUCLEOTIDE SEQUENCE [GENOMIC DNA] OF 274-1296</scope>
    <scope>FUNCTION</scope>
    <source>
        <strain>cv. Wassilewskija</strain>
    </source>
</reference>
<reference key="5">
    <citation type="journal article" date="2007" name="Plant Physiol.">
        <title>An IRE-like AGC kinase gene, MtIRE, has unique expression in the invasion zone of developing root nodules in Medicago truncatula.</title>
        <authorList>
            <person name="Pislariu C.I."/>
            <person name="Dickstein R."/>
        </authorList>
    </citation>
    <scope>GENE FAMILY</scope>
</reference>
<reference key="6">
    <citation type="journal article" date="2008" name="J. Proteome Res.">
        <title>Site-specific phosphorylation profiling of Arabidopsis proteins by mass spectrometry and peptide chip analysis.</title>
        <authorList>
            <person name="de la Fuente van Bentem S."/>
            <person name="Anrather D."/>
            <person name="Dohnal I."/>
            <person name="Roitinger E."/>
            <person name="Csaszar E."/>
            <person name="Joore J."/>
            <person name="Buijnink J."/>
            <person name="Carreri A."/>
            <person name="Forzani C."/>
            <person name="Lorkovic Z.J."/>
            <person name="Barta A."/>
            <person name="Lecourieux D."/>
            <person name="Verhounig A."/>
            <person name="Jonak C."/>
            <person name="Hirt H."/>
        </authorList>
    </citation>
    <scope>IDENTIFICATION BY MASS SPECTROMETRY [LARGE SCALE ANALYSIS]</scope>
    <source>
        <tissue>Root</tissue>
    </source>
</reference>
<reference key="7">
    <citation type="journal article" date="2009" name="Plant Physiol.">
        <title>Large-scale Arabidopsis phosphoproteome profiling reveals novel chloroplast kinase substrates and phosphorylation networks.</title>
        <authorList>
            <person name="Reiland S."/>
            <person name="Messerli G."/>
            <person name="Baerenfaller K."/>
            <person name="Gerrits B."/>
            <person name="Endler A."/>
            <person name="Grossmann J."/>
            <person name="Gruissem W."/>
            <person name="Baginsky S."/>
        </authorList>
    </citation>
    <scope>PHOSPHORYLATION [LARGE SCALE ANALYSIS] AT SER-32</scope>
    <scope>IDENTIFICATION BY MASS SPECTROMETRY [LARGE SCALE ANALYSIS]</scope>
</reference>
<protein>
    <recommendedName>
        <fullName evidence="7">Probable serine/threonine protein kinase IREH1</fullName>
        <ecNumber evidence="7">2.7.11.1</ecNumber>
    </recommendedName>
    <alternativeName>
        <fullName evidence="5">Protein IRE homolog 1</fullName>
        <shortName evidence="6">AtIREH1</shortName>
    </alternativeName>
</protein>